<proteinExistence type="evidence at protein level"/>
<feature type="chain" id="PRO_0000422413" description="Cytochrome P450 714B2">
    <location>
        <begin position="1"/>
        <end position="532"/>
    </location>
</feature>
<feature type="topological domain" description="Lumenal" evidence="2">
    <location>
        <begin position="1"/>
        <end position="2"/>
    </location>
</feature>
<feature type="transmembrane region" description="Helical; Signal-anchor for type III membrane protein" evidence="2">
    <location>
        <begin position="3"/>
        <end position="23"/>
    </location>
</feature>
<feature type="topological domain" description="Cytoplasmic" evidence="2">
    <location>
        <begin position="24"/>
        <end position="532"/>
    </location>
</feature>
<feature type="binding site" description="axial binding residue" evidence="1">
    <location>
        <position position="474"/>
    </location>
    <ligand>
        <name>heme</name>
        <dbReference type="ChEBI" id="CHEBI:30413"/>
    </ligand>
    <ligandPart>
        <name>Fe</name>
        <dbReference type="ChEBI" id="CHEBI:18248"/>
    </ligandPart>
</feature>
<keyword id="KW-0349">Heme</keyword>
<keyword id="KW-0408">Iron</keyword>
<keyword id="KW-0472">Membrane</keyword>
<keyword id="KW-0479">Metal-binding</keyword>
<keyword id="KW-0503">Monooxygenase</keyword>
<keyword id="KW-0560">Oxidoreductase</keyword>
<keyword id="KW-1185">Reference proteome</keyword>
<keyword id="KW-0735">Signal-anchor</keyword>
<keyword id="KW-0812">Transmembrane</keyword>
<keyword id="KW-1133">Transmembrane helix</keyword>
<comment type="function">
    <text evidence="3">Catalyzes the 13-hydroxylation of gibberellins (GAs). Determines the ratio of GA4 and GA1. Converts GA12 into GA53.</text>
</comment>
<comment type="cofactor">
    <cofactor evidence="1">
        <name>heme</name>
        <dbReference type="ChEBI" id="CHEBI:30413"/>
    </cofactor>
</comment>
<comment type="subcellular location">
    <subcellularLocation>
        <location evidence="4">Membrane</location>
        <topology evidence="4">Single-pass type III membrane protein</topology>
    </subcellularLocation>
</comment>
<comment type="tissue specificity">
    <text evidence="3">Highly expressed in shoot, spikelet and uppermost internode. Detected in roots, leaves and anthers.</text>
</comment>
<comment type="induction">
    <text evidence="3">Up-regulated by bioactive gibberellins.</text>
</comment>
<comment type="disruption phenotype">
    <text evidence="3">No visible phenotype and no change in the levels of 13-OH GAs; due to the redundancy with CYP714B1. Cyp714b1 and cyp714b2 double mutants have decreased levels of 13-OH GAs, increased levels of 13-H GAs, including GA4, and longer uppermost internode.</text>
</comment>
<comment type="miscellaneous">
    <text evidence="5">Overexpression of CYP714B2 in a heterologous system causes semi-dwarfism and increased 13-OH GAs content.</text>
</comment>
<comment type="similarity">
    <text evidence="4">Belongs to the cytochrome P450 family.</text>
</comment>
<comment type="sequence caution" evidence="4">
    <conflict type="erroneous gene model prediction">
        <sequence resource="EMBL-CDS" id="ABF95769"/>
    </conflict>
</comment>
<comment type="sequence caution" evidence="4">
    <conflict type="erroneous gene model prediction">
        <sequence resource="EMBL-CDS" id="BAF11929"/>
    </conflict>
</comment>
<comment type="sequence caution" evidence="4">
    <conflict type="erroneous gene model prediction">
        <sequence resource="EMBL-CDS" id="EEE58998"/>
    </conflict>
</comment>
<comment type="sequence caution" evidence="4">
    <conflict type="erroneous gene model prediction">
        <sequence resource="EMBL-CDS" id="EEE58999"/>
    </conflict>
</comment>
<sequence length="532" mass="59524">MEVGMVVVVAAKVLVSLWCVGACCLAAYLYRVVWVAPRRVLAEFRRQGIGGPRPSFPYGNLADMREAVAAARHQLAEARRRRRARDSGDGGSGAGIVHDYRPAVLPFYEKWRKDYGPIFTYSMGNVVFLHVSRPDVVRDINLCVSLDLGKSSYLKATHEPLFGGGILKSNGEAWAHQRKIIAREFFLDKVKGMVDLMVDSAQTLLKSWEEGIDKNGGTIDIKIDDDIRAYSADVISRTCFGSSYIKGKNIFLKIRELQKAVSKPNVLAEMTGLRFFPIKRNKQAWELHKQVHKLILEIVKESGEERNLLRAILLSASSSKVELAEAENFIVDNCKSIYFAGYESTAVTAAWCLMLLGLHPEWQDRVREEVQEVCAGQPVDSQSLQKMKNLTMVIQETLRLYPAGAFVSRQALQELKFGGVHIPKGVNIYIPVSTMHLDPNLWGPDVKEFNPERFSNAQPQLHSYLPFGAGARTCLGQGFAMAELKTLISLIISKFVLKLSPNYEHSPTLKLIVEPEFGVDLSLTRVQGAYRH</sequence>
<gene>
    <name type="primary">CYP714B2</name>
    <name type="ordered locus">Os03g0332100</name>
    <name type="ordered locus">LOC_Os03g21400</name>
    <name type="ordered locus">LOC_Os03g21419</name>
    <name type="ORF">OsJ_10714</name>
    <name type="ORF">OsJ_10715</name>
</gene>
<name>C14B2_ORYSJ</name>
<dbReference type="EC" id="1.14.-.-"/>
<dbReference type="EMBL" id="DP000009">
    <property type="protein sequence ID" value="ABF95769.1"/>
    <property type="status" value="ALT_SEQ"/>
    <property type="molecule type" value="Genomic_DNA"/>
</dbReference>
<dbReference type="EMBL" id="AP008209">
    <property type="protein sequence ID" value="BAF11929.1"/>
    <property type="status" value="ALT_SEQ"/>
    <property type="molecule type" value="Genomic_DNA"/>
</dbReference>
<dbReference type="EMBL" id="AP014959">
    <property type="protein sequence ID" value="BAS84037.1"/>
    <property type="molecule type" value="Genomic_DNA"/>
</dbReference>
<dbReference type="EMBL" id="CM000140">
    <property type="protein sequence ID" value="EEE58998.1"/>
    <property type="status" value="ALT_SEQ"/>
    <property type="molecule type" value="Genomic_DNA"/>
</dbReference>
<dbReference type="EMBL" id="CM000140">
    <property type="protein sequence ID" value="EEE58999.1"/>
    <property type="status" value="ALT_SEQ"/>
    <property type="molecule type" value="Genomic_DNA"/>
</dbReference>
<dbReference type="RefSeq" id="XP_015628304.1">
    <property type="nucleotide sequence ID" value="XM_015772818.1"/>
</dbReference>
<dbReference type="SMR" id="Q0DS59"/>
<dbReference type="FunCoup" id="Q0DS59">
    <property type="interactions" value="200"/>
</dbReference>
<dbReference type="STRING" id="39947.Q0DS59"/>
<dbReference type="PaxDb" id="39947-Q0DS59"/>
<dbReference type="EnsemblPlants" id="Os03t0332100-01">
    <property type="protein sequence ID" value="Os03t0332100-01"/>
    <property type="gene ID" value="Os03g0332100"/>
</dbReference>
<dbReference type="GeneID" id="4332734"/>
<dbReference type="Gramene" id="Os03t0332100-01">
    <property type="protein sequence ID" value="Os03t0332100-01"/>
    <property type="gene ID" value="Os03g0332100"/>
</dbReference>
<dbReference type="KEGG" id="dosa:Os03g0332100"/>
<dbReference type="eggNOG" id="KOG0157">
    <property type="taxonomic scope" value="Eukaryota"/>
</dbReference>
<dbReference type="HOGENOM" id="CLU_001570_5_0_1"/>
<dbReference type="InParanoid" id="Q0DS59"/>
<dbReference type="OMA" id="KWFMSTS"/>
<dbReference type="OrthoDB" id="1470350at2759"/>
<dbReference type="Proteomes" id="UP000000763">
    <property type="component" value="Chromosome 3"/>
</dbReference>
<dbReference type="Proteomes" id="UP000007752">
    <property type="component" value="Chromosome 3"/>
</dbReference>
<dbReference type="Proteomes" id="UP000059680">
    <property type="component" value="Chromosome 3"/>
</dbReference>
<dbReference type="GO" id="GO:0016020">
    <property type="term" value="C:membrane"/>
    <property type="evidence" value="ECO:0007669"/>
    <property type="project" value="UniProtKB-SubCell"/>
</dbReference>
<dbReference type="GO" id="GO:0020037">
    <property type="term" value="F:heme binding"/>
    <property type="evidence" value="ECO:0007669"/>
    <property type="project" value="InterPro"/>
</dbReference>
<dbReference type="GO" id="GO:0005506">
    <property type="term" value="F:iron ion binding"/>
    <property type="evidence" value="ECO:0007669"/>
    <property type="project" value="InterPro"/>
</dbReference>
<dbReference type="GO" id="GO:0004497">
    <property type="term" value="F:monooxygenase activity"/>
    <property type="evidence" value="ECO:0000318"/>
    <property type="project" value="GO_Central"/>
</dbReference>
<dbReference type="GO" id="GO:0016705">
    <property type="term" value="F:oxidoreductase activity, acting on paired donors, with incorporation or reduction of molecular oxygen"/>
    <property type="evidence" value="ECO:0007669"/>
    <property type="project" value="InterPro"/>
</dbReference>
<dbReference type="GO" id="GO:0006629">
    <property type="term" value="P:lipid metabolic process"/>
    <property type="evidence" value="ECO:0007669"/>
    <property type="project" value="UniProtKB-ARBA"/>
</dbReference>
<dbReference type="CDD" id="cd20640">
    <property type="entry name" value="CYP714"/>
    <property type="match status" value="1"/>
</dbReference>
<dbReference type="Gene3D" id="1.10.630.10">
    <property type="entry name" value="Cytochrome P450"/>
    <property type="match status" value="1"/>
</dbReference>
<dbReference type="InterPro" id="IPR001128">
    <property type="entry name" value="Cyt_P450"/>
</dbReference>
<dbReference type="InterPro" id="IPR017972">
    <property type="entry name" value="Cyt_P450_CS"/>
</dbReference>
<dbReference type="InterPro" id="IPR002401">
    <property type="entry name" value="Cyt_P450_E_grp-I"/>
</dbReference>
<dbReference type="InterPro" id="IPR036396">
    <property type="entry name" value="Cyt_P450_sf"/>
</dbReference>
<dbReference type="InterPro" id="IPR050665">
    <property type="entry name" value="Cytochrome_P450_Monooxygen"/>
</dbReference>
<dbReference type="PANTHER" id="PTHR24282:SF261">
    <property type="entry name" value="CYTOCHROME P450 714B2"/>
    <property type="match status" value="1"/>
</dbReference>
<dbReference type="PANTHER" id="PTHR24282">
    <property type="entry name" value="CYTOCHROME P450 FAMILY MEMBER"/>
    <property type="match status" value="1"/>
</dbReference>
<dbReference type="Pfam" id="PF00067">
    <property type="entry name" value="p450"/>
    <property type="match status" value="1"/>
</dbReference>
<dbReference type="PRINTS" id="PR00463">
    <property type="entry name" value="EP450I"/>
</dbReference>
<dbReference type="PRINTS" id="PR00385">
    <property type="entry name" value="P450"/>
</dbReference>
<dbReference type="SUPFAM" id="SSF48264">
    <property type="entry name" value="Cytochrome P450"/>
    <property type="match status" value="1"/>
</dbReference>
<dbReference type="PROSITE" id="PS00086">
    <property type="entry name" value="CYTOCHROME_P450"/>
    <property type="match status" value="1"/>
</dbReference>
<protein>
    <recommendedName>
        <fullName>Cytochrome P450 714B2</fullName>
        <ecNumber>1.14.-.-</ecNumber>
    </recommendedName>
    <alternativeName>
        <fullName>GA 13-oxidase 2</fullName>
    </alternativeName>
    <alternativeName>
        <fullName>Gibberellin 13 oxidase 2</fullName>
    </alternativeName>
</protein>
<organism>
    <name type="scientific">Oryza sativa subsp. japonica</name>
    <name type="common">Rice</name>
    <dbReference type="NCBI Taxonomy" id="39947"/>
    <lineage>
        <taxon>Eukaryota</taxon>
        <taxon>Viridiplantae</taxon>
        <taxon>Streptophyta</taxon>
        <taxon>Embryophyta</taxon>
        <taxon>Tracheophyta</taxon>
        <taxon>Spermatophyta</taxon>
        <taxon>Magnoliopsida</taxon>
        <taxon>Liliopsida</taxon>
        <taxon>Poales</taxon>
        <taxon>Poaceae</taxon>
        <taxon>BOP clade</taxon>
        <taxon>Oryzoideae</taxon>
        <taxon>Oryzeae</taxon>
        <taxon>Oryzinae</taxon>
        <taxon>Oryza</taxon>
        <taxon>Oryza sativa</taxon>
    </lineage>
</organism>
<reference key="1">
    <citation type="journal article" date="2005" name="Genome Res.">
        <title>Sequence, annotation, and analysis of synteny between rice chromosome 3 and diverged grass species.</title>
        <authorList>
            <consortium name="The rice chromosome 3 sequencing consortium"/>
            <person name="Buell C.R."/>
            <person name="Yuan Q."/>
            <person name="Ouyang S."/>
            <person name="Liu J."/>
            <person name="Zhu W."/>
            <person name="Wang A."/>
            <person name="Maiti R."/>
            <person name="Haas B."/>
            <person name="Wortman J."/>
            <person name="Pertea M."/>
            <person name="Jones K.M."/>
            <person name="Kim M."/>
            <person name="Overton L."/>
            <person name="Tsitrin T."/>
            <person name="Fadrosh D."/>
            <person name="Bera J."/>
            <person name="Weaver B."/>
            <person name="Jin S."/>
            <person name="Johri S."/>
            <person name="Reardon M."/>
            <person name="Webb K."/>
            <person name="Hill J."/>
            <person name="Moffat K."/>
            <person name="Tallon L."/>
            <person name="Van Aken S."/>
            <person name="Lewis M."/>
            <person name="Utterback T."/>
            <person name="Feldblyum T."/>
            <person name="Zismann V."/>
            <person name="Iobst S."/>
            <person name="Hsiao J."/>
            <person name="de Vazeille A.R."/>
            <person name="Salzberg S.L."/>
            <person name="White O."/>
            <person name="Fraser C.M."/>
            <person name="Yu Y."/>
            <person name="Kim H."/>
            <person name="Rambo T."/>
            <person name="Currie J."/>
            <person name="Collura K."/>
            <person name="Kernodle-Thompson S."/>
            <person name="Wei F."/>
            <person name="Kudrna K."/>
            <person name="Ammiraju J.S.S."/>
            <person name="Luo M."/>
            <person name="Goicoechea J.L."/>
            <person name="Wing R.A."/>
            <person name="Henry D."/>
            <person name="Oates R."/>
            <person name="Palmer M."/>
            <person name="Pries G."/>
            <person name="Saski C."/>
            <person name="Simmons J."/>
            <person name="Soderlund C."/>
            <person name="Nelson W."/>
            <person name="de la Bastide M."/>
            <person name="Spiegel L."/>
            <person name="Nascimento L."/>
            <person name="Huang E."/>
            <person name="Preston R."/>
            <person name="Zutavern T."/>
            <person name="Palmer L."/>
            <person name="O'Shaughnessy A."/>
            <person name="Dike S."/>
            <person name="McCombie W.R."/>
            <person name="Minx P."/>
            <person name="Cordum H."/>
            <person name="Wilson R."/>
            <person name="Jin W."/>
            <person name="Lee H.R."/>
            <person name="Jiang J."/>
            <person name="Jackson S."/>
        </authorList>
    </citation>
    <scope>NUCLEOTIDE SEQUENCE [LARGE SCALE GENOMIC DNA]</scope>
    <source>
        <strain>cv. Nipponbare</strain>
    </source>
</reference>
<reference key="2">
    <citation type="journal article" date="2005" name="Nature">
        <title>The map-based sequence of the rice genome.</title>
        <authorList>
            <consortium name="International rice genome sequencing project (IRGSP)"/>
        </authorList>
    </citation>
    <scope>NUCLEOTIDE SEQUENCE [LARGE SCALE GENOMIC DNA]</scope>
    <source>
        <strain>cv. Nipponbare</strain>
    </source>
</reference>
<reference key="3">
    <citation type="journal article" date="2008" name="Nucleic Acids Res.">
        <title>The rice annotation project database (RAP-DB): 2008 update.</title>
        <authorList>
            <consortium name="The rice annotation project (RAP)"/>
        </authorList>
    </citation>
    <scope>GENOME REANNOTATION</scope>
    <source>
        <strain>cv. Nipponbare</strain>
    </source>
</reference>
<reference key="4">
    <citation type="journal article" date="2013" name="Rice">
        <title>Improvement of the Oryza sativa Nipponbare reference genome using next generation sequence and optical map data.</title>
        <authorList>
            <person name="Kawahara Y."/>
            <person name="de la Bastide M."/>
            <person name="Hamilton J.P."/>
            <person name="Kanamori H."/>
            <person name="McCombie W.R."/>
            <person name="Ouyang S."/>
            <person name="Schwartz D.C."/>
            <person name="Tanaka T."/>
            <person name="Wu J."/>
            <person name="Zhou S."/>
            <person name="Childs K.L."/>
            <person name="Davidson R.M."/>
            <person name="Lin H."/>
            <person name="Quesada-Ocampo L."/>
            <person name="Vaillancourt B."/>
            <person name="Sakai H."/>
            <person name="Lee S.S."/>
            <person name="Kim J."/>
            <person name="Numa H."/>
            <person name="Itoh T."/>
            <person name="Buell C.R."/>
            <person name="Matsumoto T."/>
        </authorList>
    </citation>
    <scope>GENOME REANNOTATION</scope>
    <source>
        <strain>cv. Nipponbare</strain>
    </source>
</reference>
<reference key="5">
    <citation type="journal article" date="2005" name="PLoS Biol.">
        <title>The genomes of Oryza sativa: a history of duplications.</title>
        <authorList>
            <person name="Yu J."/>
            <person name="Wang J."/>
            <person name="Lin W."/>
            <person name="Li S."/>
            <person name="Li H."/>
            <person name="Zhou J."/>
            <person name="Ni P."/>
            <person name="Dong W."/>
            <person name="Hu S."/>
            <person name="Zeng C."/>
            <person name="Zhang J."/>
            <person name="Zhang Y."/>
            <person name="Li R."/>
            <person name="Xu Z."/>
            <person name="Li S."/>
            <person name="Li X."/>
            <person name="Zheng H."/>
            <person name="Cong L."/>
            <person name="Lin L."/>
            <person name="Yin J."/>
            <person name="Geng J."/>
            <person name="Li G."/>
            <person name="Shi J."/>
            <person name="Liu J."/>
            <person name="Lv H."/>
            <person name="Li J."/>
            <person name="Wang J."/>
            <person name="Deng Y."/>
            <person name="Ran L."/>
            <person name="Shi X."/>
            <person name="Wang X."/>
            <person name="Wu Q."/>
            <person name="Li C."/>
            <person name="Ren X."/>
            <person name="Wang J."/>
            <person name="Wang X."/>
            <person name="Li D."/>
            <person name="Liu D."/>
            <person name="Zhang X."/>
            <person name="Ji Z."/>
            <person name="Zhao W."/>
            <person name="Sun Y."/>
            <person name="Zhang Z."/>
            <person name="Bao J."/>
            <person name="Han Y."/>
            <person name="Dong L."/>
            <person name="Ji J."/>
            <person name="Chen P."/>
            <person name="Wu S."/>
            <person name="Liu J."/>
            <person name="Xiao Y."/>
            <person name="Bu D."/>
            <person name="Tan J."/>
            <person name="Yang L."/>
            <person name="Ye C."/>
            <person name="Zhang J."/>
            <person name="Xu J."/>
            <person name="Zhou Y."/>
            <person name="Yu Y."/>
            <person name="Zhang B."/>
            <person name="Zhuang S."/>
            <person name="Wei H."/>
            <person name="Liu B."/>
            <person name="Lei M."/>
            <person name="Yu H."/>
            <person name="Li Y."/>
            <person name="Xu H."/>
            <person name="Wei S."/>
            <person name="He X."/>
            <person name="Fang L."/>
            <person name="Zhang Z."/>
            <person name="Zhang Y."/>
            <person name="Huang X."/>
            <person name="Su Z."/>
            <person name="Tong W."/>
            <person name="Li J."/>
            <person name="Tong Z."/>
            <person name="Li S."/>
            <person name="Ye J."/>
            <person name="Wang L."/>
            <person name="Fang L."/>
            <person name="Lei T."/>
            <person name="Chen C.-S."/>
            <person name="Chen H.-C."/>
            <person name="Xu Z."/>
            <person name="Li H."/>
            <person name="Huang H."/>
            <person name="Zhang F."/>
            <person name="Xu H."/>
            <person name="Li N."/>
            <person name="Zhao C."/>
            <person name="Li S."/>
            <person name="Dong L."/>
            <person name="Huang Y."/>
            <person name="Li L."/>
            <person name="Xi Y."/>
            <person name="Qi Q."/>
            <person name="Li W."/>
            <person name="Zhang B."/>
            <person name="Hu W."/>
            <person name="Zhang Y."/>
            <person name="Tian X."/>
            <person name="Jiao Y."/>
            <person name="Liang X."/>
            <person name="Jin J."/>
            <person name="Gao L."/>
            <person name="Zheng W."/>
            <person name="Hao B."/>
            <person name="Liu S.-M."/>
            <person name="Wang W."/>
            <person name="Yuan L."/>
            <person name="Cao M."/>
            <person name="McDermott J."/>
            <person name="Samudrala R."/>
            <person name="Wang J."/>
            <person name="Wong G.K.-S."/>
            <person name="Yang H."/>
        </authorList>
    </citation>
    <scope>NUCLEOTIDE SEQUENCE [LARGE SCALE GENOMIC DNA]</scope>
    <source>
        <strain>cv. Nipponbare</strain>
    </source>
</reference>
<reference key="6">
    <citation type="journal article" date="2013" name="Proc. Natl. Acad. Sci. U.S.A.">
        <title>CYP714B1 and CYP714B2 encode gibberellin 13-oxidases that reduce gibberellin activity in rice.</title>
        <authorList>
            <person name="Magome H."/>
            <person name="Nomura T."/>
            <person name="Hanada A."/>
            <person name="Takeda-Kamiya N."/>
            <person name="Ohnishi T."/>
            <person name="Shinma Y."/>
            <person name="Katsumata T."/>
            <person name="Kawaide H."/>
            <person name="Kamiya Y."/>
            <person name="Yamaguchi S."/>
        </authorList>
    </citation>
    <scope>FUNCTION</scope>
    <scope>TISSUE SPECIFICITY</scope>
    <scope>CATALYTIC ACTIVITY</scope>
    <scope>DISRUPTION PHENOTYPE</scope>
    <scope>INDUCTION BY GIBBERELLIN</scope>
</reference>
<evidence type="ECO:0000250" key="1"/>
<evidence type="ECO:0000255" key="2"/>
<evidence type="ECO:0000269" key="3">
    <source>
    </source>
</evidence>
<evidence type="ECO:0000305" key="4"/>
<evidence type="ECO:0000305" key="5">
    <source>
    </source>
</evidence>
<accession>Q0DS59</accession>
<accession>A0A0P0VX58</accession>
<accession>B9F8A0</accession>
<accession>B9F8A1</accession>
<accession>Q10LX1</accession>